<organism>
    <name type="scientific">Arabidopsis thaliana</name>
    <name type="common">Mouse-ear cress</name>
    <dbReference type="NCBI Taxonomy" id="3702"/>
    <lineage>
        <taxon>Eukaryota</taxon>
        <taxon>Viridiplantae</taxon>
        <taxon>Streptophyta</taxon>
        <taxon>Embryophyta</taxon>
        <taxon>Tracheophyta</taxon>
        <taxon>Spermatophyta</taxon>
        <taxon>Magnoliopsida</taxon>
        <taxon>eudicotyledons</taxon>
        <taxon>Gunneridae</taxon>
        <taxon>Pentapetalae</taxon>
        <taxon>rosids</taxon>
        <taxon>malvids</taxon>
        <taxon>Brassicales</taxon>
        <taxon>Brassicaceae</taxon>
        <taxon>Camelineae</taxon>
        <taxon>Arabidopsis</taxon>
    </lineage>
</organism>
<keyword id="KW-0025">Alternative splicing</keyword>
<keyword id="KW-0156">Chromatin regulator</keyword>
<keyword id="KW-0175">Coiled coil</keyword>
<keyword id="KW-0227">DNA damage</keyword>
<keyword id="KW-0234">DNA repair</keyword>
<keyword id="KW-0235">DNA replication</keyword>
<keyword id="KW-0539">Nucleus</keyword>
<keyword id="KW-1185">Reference proteome</keyword>
<keyword id="KW-0804">Transcription</keyword>
<keyword id="KW-0805">Transcription regulation</keyword>
<dbReference type="EMBL" id="AB027229">
    <property type="protein sequence ID" value="BAA77811.1"/>
    <property type="molecule type" value="Genomic_DNA"/>
</dbReference>
<dbReference type="EMBL" id="AC001229">
    <property type="protein sequence ID" value="AAB60903.1"/>
    <property type="status" value="ALT_SEQ"/>
    <property type="molecule type" value="Genomic_DNA"/>
</dbReference>
<dbReference type="EMBL" id="AC004512">
    <property type="protein sequence ID" value="AAC27156.1"/>
    <property type="status" value="ALT_SEQ"/>
    <property type="molecule type" value="Genomic_DNA"/>
</dbReference>
<dbReference type="EMBL" id="CP002684">
    <property type="protein sequence ID" value="AEE34379.1"/>
    <property type="molecule type" value="Genomic_DNA"/>
</dbReference>
<dbReference type="EMBL" id="AY126994">
    <property type="protein sequence ID" value="AAM83221.1"/>
    <property type="molecule type" value="mRNA"/>
</dbReference>
<dbReference type="PIR" id="E96679">
    <property type="entry name" value="E96679"/>
</dbReference>
<dbReference type="PIR" id="F96679">
    <property type="entry name" value="F96679"/>
</dbReference>
<dbReference type="PIR" id="T02369">
    <property type="entry name" value="T02369"/>
</dbReference>
<dbReference type="RefSeq" id="NP_176725.1">
    <molecule id="Q9SXY0-1"/>
    <property type="nucleotide sequence ID" value="NM_105221.3"/>
</dbReference>
<dbReference type="SMR" id="Q9SXY0"/>
<dbReference type="BioGRID" id="28079">
    <property type="interactions" value="2"/>
</dbReference>
<dbReference type="FunCoup" id="Q9SXY0">
    <property type="interactions" value="590"/>
</dbReference>
<dbReference type="STRING" id="3702.Q9SXY0"/>
<dbReference type="iPTMnet" id="Q9SXY0"/>
<dbReference type="PaxDb" id="3702-AT1G65470.1"/>
<dbReference type="ProteomicsDB" id="230958">
    <molecule id="Q9SXY0-1"/>
</dbReference>
<dbReference type="EnsemblPlants" id="AT1G65470.1">
    <molecule id="Q9SXY0-1"/>
    <property type="protein sequence ID" value="AT1G65470.1"/>
    <property type="gene ID" value="AT1G65470"/>
</dbReference>
<dbReference type="GeneID" id="842858"/>
<dbReference type="Gramene" id="AT1G65470.1">
    <molecule id="Q9SXY0-1"/>
    <property type="protein sequence ID" value="AT1G65470.1"/>
    <property type="gene ID" value="AT1G65470"/>
</dbReference>
<dbReference type="KEGG" id="ath:AT1G65470"/>
<dbReference type="Araport" id="AT1G65470"/>
<dbReference type="TAIR" id="AT1G65470">
    <property type="gene designation" value="FAS1"/>
</dbReference>
<dbReference type="eggNOG" id="KOG4364">
    <property type="taxonomic scope" value="Eukaryota"/>
</dbReference>
<dbReference type="InParanoid" id="Q9SXY0"/>
<dbReference type="OMA" id="SETALWC"/>
<dbReference type="OrthoDB" id="440676at2759"/>
<dbReference type="PhylomeDB" id="Q9SXY0"/>
<dbReference type="PRO" id="PR:Q9SXY0"/>
<dbReference type="Proteomes" id="UP000006548">
    <property type="component" value="Chromosome 1"/>
</dbReference>
<dbReference type="ExpressionAtlas" id="Q9SXY0">
    <property type="expression patterns" value="baseline and differential"/>
</dbReference>
<dbReference type="GO" id="GO:0033186">
    <property type="term" value="C:CAF-1 complex"/>
    <property type="evidence" value="ECO:0000353"/>
    <property type="project" value="TAIR"/>
</dbReference>
<dbReference type="GO" id="GO:0005634">
    <property type="term" value="C:nucleus"/>
    <property type="evidence" value="ECO:0007669"/>
    <property type="project" value="UniProtKB-SubCell"/>
</dbReference>
<dbReference type="GO" id="GO:0042393">
    <property type="term" value="F:histone binding"/>
    <property type="evidence" value="ECO:0000250"/>
    <property type="project" value="TAIR"/>
</dbReference>
<dbReference type="GO" id="GO:0051301">
    <property type="term" value="P:cell division"/>
    <property type="evidence" value="ECO:0000315"/>
    <property type="project" value="TAIR"/>
</dbReference>
<dbReference type="GO" id="GO:0006325">
    <property type="term" value="P:chromatin organization"/>
    <property type="evidence" value="ECO:0000314"/>
    <property type="project" value="TAIR"/>
</dbReference>
<dbReference type="GO" id="GO:0006310">
    <property type="term" value="P:DNA recombination"/>
    <property type="evidence" value="ECO:0000315"/>
    <property type="project" value="TAIR"/>
</dbReference>
<dbReference type="GO" id="GO:0006260">
    <property type="term" value="P:DNA replication"/>
    <property type="evidence" value="ECO:0007669"/>
    <property type="project" value="UniProtKB-KW"/>
</dbReference>
<dbReference type="GO" id="GO:0000724">
    <property type="term" value="P:double-strand break repair via homologous recombination"/>
    <property type="evidence" value="ECO:0000315"/>
    <property type="project" value="TAIR"/>
</dbReference>
<dbReference type="GO" id="GO:0031507">
    <property type="term" value="P:heterochromatin formation"/>
    <property type="evidence" value="ECO:0000315"/>
    <property type="project" value="TAIR"/>
</dbReference>
<dbReference type="GO" id="GO:0048366">
    <property type="term" value="P:leaf development"/>
    <property type="evidence" value="ECO:0000315"/>
    <property type="project" value="TAIR"/>
</dbReference>
<dbReference type="GO" id="GO:0009825">
    <property type="term" value="P:multidimensional cell growth"/>
    <property type="evidence" value="ECO:0000315"/>
    <property type="project" value="TAIR"/>
</dbReference>
<dbReference type="GO" id="GO:0006334">
    <property type="term" value="P:nucleosome assembly"/>
    <property type="evidence" value="ECO:0000314"/>
    <property type="project" value="TAIR"/>
</dbReference>
<dbReference type="GO" id="GO:0009555">
    <property type="term" value="P:pollen development"/>
    <property type="evidence" value="ECO:0000316"/>
    <property type="project" value="TAIR"/>
</dbReference>
<dbReference type="GO" id="GO:0045787">
    <property type="term" value="P:positive regulation of cell cycle"/>
    <property type="evidence" value="ECO:0000316"/>
    <property type="project" value="TAIR"/>
</dbReference>
<dbReference type="GO" id="GO:0009934">
    <property type="term" value="P:regulation of meristem structural organization"/>
    <property type="evidence" value="ECO:0000315"/>
    <property type="project" value="TAIR"/>
</dbReference>
<dbReference type="GO" id="GO:0010026">
    <property type="term" value="P:trichome differentiation"/>
    <property type="evidence" value="ECO:0000315"/>
    <property type="project" value="TAIR"/>
</dbReference>
<dbReference type="InterPro" id="IPR048800">
    <property type="entry name" value="Cac1-like_C"/>
</dbReference>
<dbReference type="InterPro" id="IPR022043">
    <property type="entry name" value="CAF1A_DD"/>
</dbReference>
<dbReference type="PANTHER" id="PTHR15272:SF0">
    <property type="entry name" value="CHROMATIN ASSEMBLY FACTOR 1 SUBUNIT A"/>
    <property type="match status" value="1"/>
</dbReference>
<dbReference type="PANTHER" id="PTHR15272">
    <property type="entry name" value="CHROMATIN ASSEMBLY FACTOR 1 SUBUNIT A CAF-1 SUBUNIT A"/>
    <property type="match status" value="1"/>
</dbReference>
<dbReference type="Pfam" id="PF21796">
    <property type="entry name" value="Cac1_C"/>
    <property type="match status" value="1"/>
</dbReference>
<dbReference type="Pfam" id="PF12253">
    <property type="entry name" value="CAF1A_dimeriz"/>
    <property type="match status" value="1"/>
</dbReference>
<protein>
    <recommendedName>
        <fullName>Chromatin assembly factor 1 subunit FAS1</fullName>
        <shortName>CAF-1 subunit FAS1</shortName>
    </recommendedName>
    <alternativeName>
        <fullName>CAF-1 p150 homolog</fullName>
    </alternativeName>
    <alternativeName>
        <fullName>Protein FASCIATA 1</fullName>
    </alternativeName>
</protein>
<feature type="chain" id="PRO_0000420143" description="Chromatin assembly factor 1 subunit FAS1">
    <location>
        <begin position="1"/>
        <end position="815"/>
    </location>
</feature>
<feature type="region of interest" description="Disordered" evidence="3">
    <location>
        <begin position="1"/>
        <end position="39"/>
    </location>
</feature>
<feature type="region of interest" description="Disordered" evidence="3">
    <location>
        <begin position="292"/>
        <end position="330"/>
    </location>
</feature>
<feature type="region of interest" description="Disordered" evidence="3">
    <location>
        <begin position="434"/>
        <end position="477"/>
    </location>
</feature>
<feature type="region of interest" description="Disordered" evidence="3">
    <location>
        <begin position="502"/>
        <end position="577"/>
    </location>
</feature>
<feature type="region of interest" description="Disordered" evidence="3">
    <location>
        <begin position="791"/>
        <end position="815"/>
    </location>
</feature>
<feature type="coiled-coil region" evidence="2">
    <location>
        <begin position="244"/>
        <end position="336"/>
    </location>
</feature>
<feature type="compositionally biased region" description="Basic and acidic residues" evidence="3">
    <location>
        <begin position="10"/>
        <end position="21"/>
    </location>
</feature>
<feature type="compositionally biased region" description="Basic and acidic residues" evidence="3">
    <location>
        <begin position="292"/>
        <end position="328"/>
    </location>
</feature>
<feature type="compositionally biased region" description="Acidic residues" evidence="3">
    <location>
        <begin position="516"/>
        <end position="532"/>
    </location>
</feature>
<feature type="compositionally biased region" description="Acidic residues" evidence="3">
    <location>
        <begin position="554"/>
        <end position="576"/>
    </location>
</feature>
<feature type="compositionally biased region" description="Basic and acidic residues" evidence="3">
    <location>
        <begin position="806"/>
        <end position="815"/>
    </location>
</feature>
<proteinExistence type="evidence at protein level"/>
<reference key="1">
    <citation type="journal article" date="2001" name="Cell">
        <title>FASCIATA genes for chromatin assembly factor-1 in Arabidopsis maintain the cellular organization of apical meristems.</title>
        <authorList>
            <person name="Kaya H."/>
            <person name="Shibahara K."/>
            <person name="Taoka K."/>
            <person name="Iwabuchi M."/>
            <person name="Stillman B."/>
            <person name="Araki T."/>
        </authorList>
    </citation>
    <scope>NUCLEOTIDE SEQUENCE [GENOMIC DNA]</scope>
    <scope>FUNCTION</scope>
    <scope>SUBUNIT</scope>
    <scope>TISSUE SPECIFICITY</scope>
    <scope>INDUCTION</scope>
    <scope>DISRUPTION PHENOTYPE</scope>
    <source>
        <strain>cv. Columbia</strain>
    </source>
</reference>
<reference key="2">
    <citation type="journal article" date="2000" name="Nature">
        <title>Sequence and analysis of chromosome 1 of the plant Arabidopsis thaliana.</title>
        <authorList>
            <person name="Theologis A."/>
            <person name="Ecker J.R."/>
            <person name="Palm C.J."/>
            <person name="Federspiel N.A."/>
            <person name="Kaul S."/>
            <person name="White O."/>
            <person name="Alonso J."/>
            <person name="Altafi H."/>
            <person name="Araujo R."/>
            <person name="Bowman C.L."/>
            <person name="Brooks S.Y."/>
            <person name="Buehler E."/>
            <person name="Chan A."/>
            <person name="Chao Q."/>
            <person name="Chen H."/>
            <person name="Cheuk R.F."/>
            <person name="Chin C.W."/>
            <person name="Chung M.K."/>
            <person name="Conn L."/>
            <person name="Conway A.B."/>
            <person name="Conway A.R."/>
            <person name="Creasy T.H."/>
            <person name="Dewar K."/>
            <person name="Dunn P."/>
            <person name="Etgu P."/>
            <person name="Feldblyum T.V."/>
            <person name="Feng J.-D."/>
            <person name="Fong B."/>
            <person name="Fujii C.Y."/>
            <person name="Gill J.E."/>
            <person name="Goldsmith A.D."/>
            <person name="Haas B."/>
            <person name="Hansen N.F."/>
            <person name="Hughes B."/>
            <person name="Huizar L."/>
            <person name="Hunter J.L."/>
            <person name="Jenkins J."/>
            <person name="Johnson-Hopson C."/>
            <person name="Khan S."/>
            <person name="Khaykin E."/>
            <person name="Kim C.J."/>
            <person name="Koo H.L."/>
            <person name="Kremenetskaia I."/>
            <person name="Kurtz D.B."/>
            <person name="Kwan A."/>
            <person name="Lam B."/>
            <person name="Langin-Hooper S."/>
            <person name="Lee A."/>
            <person name="Lee J.M."/>
            <person name="Lenz C.A."/>
            <person name="Li J.H."/>
            <person name="Li Y.-P."/>
            <person name="Lin X."/>
            <person name="Liu S.X."/>
            <person name="Liu Z.A."/>
            <person name="Luros J.S."/>
            <person name="Maiti R."/>
            <person name="Marziali A."/>
            <person name="Militscher J."/>
            <person name="Miranda M."/>
            <person name="Nguyen M."/>
            <person name="Nierman W.C."/>
            <person name="Osborne B.I."/>
            <person name="Pai G."/>
            <person name="Peterson J."/>
            <person name="Pham P.K."/>
            <person name="Rizzo M."/>
            <person name="Rooney T."/>
            <person name="Rowley D."/>
            <person name="Sakano H."/>
            <person name="Salzberg S.L."/>
            <person name="Schwartz J.R."/>
            <person name="Shinn P."/>
            <person name="Southwick A.M."/>
            <person name="Sun H."/>
            <person name="Tallon L.J."/>
            <person name="Tambunga G."/>
            <person name="Toriumi M.J."/>
            <person name="Town C.D."/>
            <person name="Utterback T."/>
            <person name="Van Aken S."/>
            <person name="Vaysberg M."/>
            <person name="Vysotskaia V.S."/>
            <person name="Walker M."/>
            <person name="Wu D."/>
            <person name="Yu G."/>
            <person name="Fraser C.M."/>
            <person name="Venter J.C."/>
            <person name="Davis R.W."/>
        </authorList>
    </citation>
    <scope>NUCLEOTIDE SEQUENCE [LARGE SCALE GENOMIC DNA]</scope>
    <source>
        <strain>cv. Columbia</strain>
    </source>
</reference>
<reference key="3">
    <citation type="journal article" date="2017" name="Plant J.">
        <title>Araport11: a complete reannotation of the Arabidopsis thaliana reference genome.</title>
        <authorList>
            <person name="Cheng C.Y."/>
            <person name="Krishnakumar V."/>
            <person name="Chan A.P."/>
            <person name="Thibaud-Nissen F."/>
            <person name="Schobel S."/>
            <person name="Town C.D."/>
        </authorList>
    </citation>
    <scope>GENOME REANNOTATION</scope>
    <source>
        <strain>cv. Columbia</strain>
    </source>
</reference>
<reference key="4">
    <citation type="journal article" date="2003" name="Science">
        <title>Empirical analysis of transcriptional activity in the Arabidopsis genome.</title>
        <authorList>
            <person name="Yamada K."/>
            <person name="Lim J."/>
            <person name="Dale J.M."/>
            <person name="Chen H."/>
            <person name="Shinn P."/>
            <person name="Palm C.J."/>
            <person name="Southwick A.M."/>
            <person name="Wu H.C."/>
            <person name="Kim C.J."/>
            <person name="Nguyen M."/>
            <person name="Pham P.K."/>
            <person name="Cheuk R.F."/>
            <person name="Karlin-Newmann G."/>
            <person name="Liu S.X."/>
            <person name="Lam B."/>
            <person name="Sakano H."/>
            <person name="Wu T."/>
            <person name="Yu G."/>
            <person name="Miranda M."/>
            <person name="Quach H.L."/>
            <person name="Tripp M."/>
            <person name="Chang C.H."/>
            <person name="Lee J.M."/>
            <person name="Toriumi M.J."/>
            <person name="Chan M.M."/>
            <person name="Tang C.C."/>
            <person name="Onodera C.S."/>
            <person name="Deng J.M."/>
            <person name="Akiyama K."/>
            <person name="Ansari Y."/>
            <person name="Arakawa T."/>
            <person name="Banh J."/>
            <person name="Banno F."/>
            <person name="Bowser L."/>
            <person name="Brooks S.Y."/>
            <person name="Carninci P."/>
            <person name="Chao Q."/>
            <person name="Choy N."/>
            <person name="Enju A."/>
            <person name="Goldsmith A.D."/>
            <person name="Gurjal M."/>
            <person name="Hansen N.F."/>
            <person name="Hayashizaki Y."/>
            <person name="Johnson-Hopson C."/>
            <person name="Hsuan V.W."/>
            <person name="Iida K."/>
            <person name="Karnes M."/>
            <person name="Khan S."/>
            <person name="Koesema E."/>
            <person name="Ishida J."/>
            <person name="Jiang P.X."/>
            <person name="Jones T."/>
            <person name="Kawai J."/>
            <person name="Kamiya A."/>
            <person name="Meyers C."/>
            <person name="Nakajima M."/>
            <person name="Narusaka M."/>
            <person name="Seki M."/>
            <person name="Sakurai T."/>
            <person name="Satou M."/>
            <person name="Tamse R."/>
            <person name="Vaysberg M."/>
            <person name="Wallender E.K."/>
            <person name="Wong C."/>
            <person name="Yamamura Y."/>
            <person name="Yuan S."/>
            <person name="Shinozaki K."/>
            <person name="Davis R.W."/>
            <person name="Theologis A."/>
            <person name="Ecker J.R."/>
        </authorList>
    </citation>
    <scope>NUCLEOTIDE SEQUENCE [LARGE SCALE MRNA]</scope>
    <source>
        <strain>cv. Columbia</strain>
    </source>
</reference>
<reference key="5">
    <citation type="journal article" date="2006" name="Development">
        <title>Chromatin assembly factor CAF-1 is required for cellular differentiation during plant development.</title>
        <authorList>
            <person name="Exner V."/>
            <person name="Taranto P."/>
            <person name="Schoenrock N."/>
            <person name="Gruissem W."/>
            <person name="Hennig L."/>
        </authorList>
    </citation>
    <scope>FUNCTION</scope>
</reference>
<reference key="6">
    <citation type="journal article" date="2006" name="EMBO J.">
        <title>Increased frequency of homologous recombination and T-DNA integration in Arabidopsis CAF-1 mutants.</title>
        <authorList>
            <person name="Endo M."/>
            <person name="Ishikawa Y."/>
            <person name="Osakabe K."/>
            <person name="Nakayama S."/>
            <person name="Kaya H."/>
            <person name="Araki T."/>
            <person name="Shibahara K."/>
            <person name="Abe K."/>
            <person name="Ichikawa H."/>
            <person name="Valentine L."/>
            <person name="Hohn B."/>
            <person name="Toki S."/>
        </authorList>
    </citation>
    <scope>FUNCTION</scope>
</reference>
<reference key="7">
    <citation type="journal article" date="2006" name="J. Biol. Chem.">
        <title>Functional genomic analysis of CAF-1 mutants in Arabidopsis thaliana.</title>
        <authorList>
            <person name="Schoenrock N."/>
            <person name="Exner V."/>
            <person name="Probst A."/>
            <person name="Gruissem W."/>
            <person name="Hennig L."/>
        </authorList>
    </citation>
    <scope>FUNCTION</scope>
</reference>
<reference key="8">
    <citation type="journal article" date="2006" name="Plant Cell">
        <title>The chromatin assembly factor subunit FASCIATA1 is involved in homologous recombination in plants.</title>
        <authorList>
            <person name="Kirik A."/>
            <person name="Pecinka A."/>
            <person name="Wendeler E."/>
            <person name="Reiss B."/>
        </authorList>
    </citation>
    <scope>FUNCTION</scope>
    <scope>DISRUPTION PHENOTYPE</scope>
    <source>
        <strain>cv. C24</strain>
    </source>
</reference>
<reference key="9">
    <citation type="journal article" date="2007" name="Plant Physiol.">
        <title>E2F regulates FASCIATA1, a chromatin assembly gene whose loss switches on the endocycle and activates gene expression by changing the epigenetic status.</title>
        <authorList>
            <person name="Ramirez-Parra E."/>
            <person name="Gutierrez C."/>
        </authorList>
    </citation>
    <scope>FUNCTION</scope>
</reference>
<reference key="10">
    <citation type="journal article" date="2008" name="Development">
        <title>Chromatin assembly factor 1 regulates the cell cycle but not cell fate during male gametogenesis in Arabidopsis thaliana.</title>
        <authorList>
            <person name="Chen Z."/>
            <person name="Tan J.L."/>
            <person name="Ingouff M."/>
            <person name="Sundaresan V."/>
            <person name="Berger F."/>
        </authorList>
    </citation>
    <scope>FUNCTION</scope>
</reference>
<reference key="11">
    <citation type="journal article" date="2010" name="Plant Cell">
        <title>Dysfunction of chromatin assembly factor 1 induces shortening of telomeres and loss of 45S rDNA in Arabidopsis thaliana.</title>
        <authorList>
            <person name="Mozgova I."/>
            <person name="Mokros P."/>
            <person name="Fajkus J."/>
        </authorList>
    </citation>
    <scope>FUNCTION</scope>
</reference>
<reference key="12">
    <citation type="journal article" date="2011" name="Mol. Plant">
        <title>The cyclophilin AtCYP71 interacts with CAF-1 and LHP1 and functions in multiple chromatin remodeling processes.</title>
        <authorList>
            <person name="Li H."/>
            <person name="Luan S."/>
        </authorList>
    </citation>
    <scope>INTERACTION WITH CYP71</scope>
</reference>
<comment type="function">
    <text evidence="4 5 6 7 8 9 10 11">Component of the chromatin assembly factor complex (CAF-1) involved in chromatin assembly following DNA replication and DNA repair. Assembles histone octamers onto replicating DNA in vitro. Required for several aspects of development, including seedling growth and leaf hair differentiation. Plays a critical role in the organization of shoot apical meristem (SAM) and root apical meristem (RAM) during postembryonic development by facilitating stable maintenance of gene expression states. Seems not required to maintain transcriptional repression of heterochromatic genes. Involved in heterologous recombination. May repress endocycle.</text>
</comment>
<comment type="subunit">
    <text evidence="4 12">Component of the chromatin assembly factor 1 (CAF-1) complex, composed of FAS1, FAS2 and MSI1. Interacts with CYP71.</text>
</comment>
<comment type="subcellular location">
    <subcellularLocation>
        <location evidence="1">Nucleus</location>
    </subcellularLocation>
</comment>
<comment type="alternative products">
    <event type="alternative splicing"/>
    <isoform>
        <id>Q9SXY0-1</id>
        <name>1</name>
        <sequence type="displayed"/>
    </isoform>
    <text>A number of isoforms are produced. According to EST sequences.</text>
</comment>
<comment type="tissue specificity">
    <text evidence="4">Expressed in the shoot apical meristem, young leaf primordia, root tip and first lateral root primordium at the hypocotyl/root junction.</text>
</comment>
<comment type="induction">
    <text evidence="4">Cell cycle-regulated, showing a peak in the S-phase.</text>
</comment>
<comment type="disruption phenotype">
    <text evidence="4 6">Fasciated plants with broad, flat stems and disrupted phyllotaxy. Shoot apical meristem enlargement and altered floral development. Reduced heterochromatin content, more open conformation of euchromatin and dramatic increase of homologous recombination.</text>
</comment>
<comment type="similarity">
    <text evidence="13">Belongs to the CHAF1A family.</text>
</comment>
<comment type="sequence caution" evidence="13">
    <conflict type="erroneous gene model prediction">
        <sequence resource="EMBL-CDS" id="AAB60903"/>
    </conflict>
</comment>
<comment type="sequence caution" evidence="13">
    <conflict type="erroneous gene model prediction">
        <sequence resource="EMBL-CDS" id="AAC27156"/>
    </conflict>
</comment>
<gene>
    <name type="primary">FAS1</name>
    <name type="synonym">NFB2</name>
    <name type="ordered locus">At1g65470</name>
    <name type="ORF">F5I14.2</name>
    <name type="ORF">T8F5.24</name>
</gene>
<sequence>MDEVSTVNENENRKTMIEPKKLNKRKREPTAIENLTSEEKESQISSLNLEMKGLFDYFREVMDKSKRTDLFSGFSECSSLNSMVALLMEEMSLPLSKLVDEIYLKLKEKTESVTMVAVKSAVVSVGQRVSYGVLNVDADVLEDDSESCLWCWETRDLKIMPSSVRGVLKLRRTCRKKIHERITAVSAMLAALQREETEKLWRSDLSKAAEKLGKILSEVDIRSFMDNMMQKNSSEMAEKDSKREEKLLLKQLEKNRCEAEKEKKRMERQVLKEKLQQEKEQKLLQKAIVDENNKEKEETESRKRIKKQQDESEKEQKRREKEQAELKKQLQVQKQASIMERFLKKSKDSSLTQPKLPSSEVTAQELSCTKHENEIGKVVQAIDNAFSTTCEATVDDIRREHFASWRQLGHLLSSSKKHWGMRRQPKSELFPKLKLSTNSGVTSDGEPNMEKQGDGCEENNFDGRQCKPSSSNRKKSRRVKQLLQFDKSCRPGFYGIWPSQSQVVKPRRPLQKDPELDYEVDSDEEWEEEEAGESLSDCEKDEDESLEEGCSKADDEDDSEDDFMVPDGYLSEDEGVQVDRMDIDPSEQDANTTSSKQDQESPEFCALLQQQKHLQNLTDHALKKTQPLIICNLTHEKVSLLAAKDLEGTQKVEQICLRALMVRQFPWSSLIEISINDIQDEDQEASKFSCSQSTPPSNSKAKIIPDSDLLTVVSTIQSCSQGINRVVETLQQKFPDVPKTKLRQKVREISDFEDSRWQVKKEVLTKLGLSPSPDKGGKRLPKTISTFFSKRCLPPSTKPQPAVEDAAERLENENA</sequence>
<evidence type="ECO:0000250" key="1"/>
<evidence type="ECO:0000255" key="2"/>
<evidence type="ECO:0000256" key="3">
    <source>
        <dbReference type="SAM" id="MobiDB-lite"/>
    </source>
</evidence>
<evidence type="ECO:0000269" key="4">
    <source>
    </source>
</evidence>
<evidence type="ECO:0000269" key="5">
    <source>
    </source>
</evidence>
<evidence type="ECO:0000269" key="6">
    <source>
    </source>
</evidence>
<evidence type="ECO:0000269" key="7">
    <source>
    </source>
</evidence>
<evidence type="ECO:0000269" key="8">
    <source>
    </source>
</evidence>
<evidence type="ECO:0000269" key="9">
    <source>
    </source>
</evidence>
<evidence type="ECO:0000269" key="10">
    <source>
    </source>
</evidence>
<evidence type="ECO:0000269" key="11">
    <source>
    </source>
</evidence>
<evidence type="ECO:0000269" key="12">
    <source>
    </source>
</evidence>
<evidence type="ECO:0000305" key="13"/>
<name>FAS1_ARATH</name>
<accession>Q9SXY0</accession>
<accession>O04466</accession>
<accession>O80817</accession>